<accession>B2V5W6</accession>
<comment type="function">
    <text evidence="1">GTPase that plays an essential role in the late steps of ribosome biogenesis.</text>
</comment>
<comment type="subunit">
    <text evidence="1">Associates with the 50S ribosomal subunit.</text>
</comment>
<comment type="similarity">
    <text evidence="1">Belongs to the TRAFAC class TrmE-Era-EngA-EngB-Septin-like GTPase superfamily. EngA (Der) GTPase family.</text>
</comment>
<evidence type="ECO:0000255" key="1">
    <source>
        <dbReference type="HAMAP-Rule" id="MF_00195"/>
    </source>
</evidence>
<organism>
    <name type="scientific">Sulfurihydrogenibium sp. (strain YO3AOP1)</name>
    <dbReference type="NCBI Taxonomy" id="436114"/>
    <lineage>
        <taxon>Bacteria</taxon>
        <taxon>Pseudomonadati</taxon>
        <taxon>Aquificota</taxon>
        <taxon>Aquificia</taxon>
        <taxon>Aquificales</taxon>
        <taxon>Hydrogenothermaceae</taxon>
        <taxon>Sulfurihydrogenibium</taxon>
    </lineage>
</organism>
<dbReference type="EMBL" id="CP001080">
    <property type="protein sequence ID" value="ACD67060.1"/>
    <property type="molecule type" value="Genomic_DNA"/>
</dbReference>
<dbReference type="RefSeq" id="WP_012460117.1">
    <property type="nucleotide sequence ID" value="NC_010730.1"/>
</dbReference>
<dbReference type="SMR" id="B2V5W6"/>
<dbReference type="STRING" id="436114.SYO3AOP1_1458"/>
<dbReference type="KEGG" id="sul:SYO3AOP1_1458"/>
<dbReference type="eggNOG" id="COG1160">
    <property type="taxonomic scope" value="Bacteria"/>
</dbReference>
<dbReference type="HOGENOM" id="CLU_016077_6_2_0"/>
<dbReference type="GO" id="GO:0005525">
    <property type="term" value="F:GTP binding"/>
    <property type="evidence" value="ECO:0007669"/>
    <property type="project" value="UniProtKB-UniRule"/>
</dbReference>
<dbReference type="GO" id="GO:0043022">
    <property type="term" value="F:ribosome binding"/>
    <property type="evidence" value="ECO:0007669"/>
    <property type="project" value="TreeGrafter"/>
</dbReference>
<dbReference type="GO" id="GO:0042254">
    <property type="term" value="P:ribosome biogenesis"/>
    <property type="evidence" value="ECO:0007669"/>
    <property type="project" value="UniProtKB-KW"/>
</dbReference>
<dbReference type="CDD" id="cd01894">
    <property type="entry name" value="EngA1"/>
    <property type="match status" value="1"/>
</dbReference>
<dbReference type="CDD" id="cd01895">
    <property type="entry name" value="EngA2"/>
    <property type="match status" value="1"/>
</dbReference>
<dbReference type="FunFam" id="3.30.300.20:FF:000004">
    <property type="entry name" value="GTPase Der"/>
    <property type="match status" value="1"/>
</dbReference>
<dbReference type="FunFam" id="3.40.50.300:FF:000040">
    <property type="entry name" value="GTPase Der"/>
    <property type="match status" value="1"/>
</dbReference>
<dbReference type="FunFam" id="3.40.50.300:FF:000057">
    <property type="entry name" value="GTPase Der"/>
    <property type="match status" value="1"/>
</dbReference>
<dbReference type="Gene3D" id="3.30.300.20">
    <property type="match status" value="1"/>
</dbReference>
<dbReference type="Gene3D" id="3.40.50.300">
    <property type="entry name" value="P-loop containing nucleotide triphosphate hydrolases"/>
    <property type="match status" value="2"/>
</dbReference>
<dbReference type="HAMAP" id="MF_00195">
    <property type="entry name" value="GTPase_Der"/>
    <property type="match status" value="1"/>
</dbReference>
<dbReference type="InterPro" id="IPR031166">
    <property type="entry name" value="G_ENGA"/>
</dbReference>
<dbReference type="InterPro" id="IPR006073">
    <property type="entry name" value="GTP-bd"/>
</dbReference>
<dbReference type="InterPro" id="IPR016484">
    <property type="entry name" value="GTPase_Der"/>
</dbReference>
<dbReference type="InterPro" id="IPR032859">
    <property type="entry name" value="KH_dom-like"/>
</dbReference>
<dbReference type="InterPro" id="IPR015946">
    <property type="entry name" value="KH_dom-like_a/b"/>
</dbReference>
<dbReference type="InterPro" id="IPR027417">
    <property type="entry name" value="P-loop_NTPase"/>
</dbReference>
<dbReference type="InterPro" id="IPR005225">
    <property type="entry name" value="Small_GTP-bd"/>
</dbReference>
<dbReference type="NCBIfam" id="TIGR03594">
    <property type="entry name" value="GTPase_EngA"/>
    <property type="match status" value="1"/>
</dbReference>
<dbReference type="NCBIfam" id="TIGR00231">
    <property type="entry name" value="small_GTP"/>
    <property type="match status" value="2"/>
</dbReference>
<dbReference type="PANTHER" id="PTHR43834">
    <property type="entry name" value="GTPASE DER"/>
    <property type="match status" value="1"/>
</dbReference>
<dbReference type="PANTHER" id="PTHR43834:SF6">
    <property type="entry name" value="GTPASE DER"/>
    <property type="match status" value="1"/>
</dbReference>
<dbReference type="Pfam" id="PF14714">
    <property type="entry name" value="KH_dom-like"/>
    <property type="match status" value="1"/>
</dbReference>
<dbReference type="Pfam" id="PF01926">
    <property type="entry name" value="MMR_HSR1"/>
    <property type="match status" value="2"/>
</dbReference>
<dbReference type="PIRSF" id="PIRSF006485">
    <property type="entry name" value="GTP-binding_EngA"/>
    <property type="match status" value="1"/>
</dbReference>
<dbReference type="PRINTS" id="PR00326">
    <property type="entry name" value="GTP1OBG"/>
</dbReference>
<dbReference type="SUPFAM" id="SSF52540">
    <property type="entry name" value="P-loop containing nucleoside triphosphate hydrolases"/>
    <property type="match status" value="2"/>
</dbReference>
<dbReference type="PROSITE" id="PS51712">
    <property type="entry name" value="G_ENGA"/>
    <property type="match status" value="2"/>
</dbReference>
<feature type="chain" id="PRO_1000099169" description="GTPase Der">
    <location>
        <begin position="1"/>
        <end position="445"/>
    </location>
</feature>
<feature type="domain" description="EngA-type G 1">
    <location>
        <begin position="2"/>
        <end position="166"/>
    </location>
</feature>
<feature type="domain" description="EngA-type G 2">
    <location>
        <begin position="182"/>
        <end position="355"/>
    </location>
</feature>
<feature type="domain" description="KH-like" evidence="1">
    <location>
        <begin position="356"/>
        <end position="440"/>
    </location>
</feature>
<feature type="binding site" evidence="1">
    <location>
        <begin position="8"/>
        <end position="15"/>
    </location>
    <ligand>
        <name>GTP</name>
        <dbReference type="ChEBI" id="CHEBI:37565"/>
        <label>1</label>
    </ligand>
</feature>
<feature type="binding site" evidence="1">
    <location>
        <begin position="55"/>
        <end position="59"/>
    </location>
    <ligand>
        <name>GTP</name>
        <dbReference type="ChEBI" id="CHEBI:37565"/>
        <label>1</label>
    </ligand>
</feature>
<feature type="binding site" evidence="1">
    <location>
        <begin position="118"/>
        <end position="121"/>
    </location>
    <ligand>
        <name>GTP</name>
        <dbReference type="ChEBI" id="CHEBI:37565"/>
        <label>1</label>
    </ligand>
</feature>
<feature type="binding site" evidence="1">
    <location>
        <begin position="188"/>
        <end position="195"/>
    </location>
    <ligand>
        <name>GTP</name>
        <dbReference type="ChEBI" id="CHEBI:37565"/>
        <label>2</label>
    </ligand>
</feature>
<feature type="binding site" evidence="1">
    <location>
        <begin position="235"/>
        <end position="239"/>
    </location>
    <ligand>
        <name>GTP</name>
        <dbReference type="ChEBI" id="CHEBI:37565"/>
        <label>2</label>
    </ligand>
</feature>
<feature type="binding site" evidence="1">
    <location>
        <begin position="300"/>
        <end position="303"/>
    </location>
    <ligand>
        <name>GTP</name>
        <dbReference type="ChEBI" id="CHEBI:37565"/>
        <label>2</label>
    </ligand>
</feature>
<name>DER_SULSY</name>
<gene>
    <name evidence="1" type="primary">der</name>
    <name type="synonym">engA</name>
    <name type="ordered locus">SYO3AOP1_1458</name>
</gene>
<sequence>MFRVAIVGIPNVGKSSLFNRIIGQRKAIVEDIPGVTRDRIVSTAEWRGVKFEVVDTGGYITGDEDKFAPYIRKQVEKELELSDLFIFVVDGKQGLTPLDKEIANILHRTEKPVIVAVNKIDDPEKEKLAYEFYELGFENIIPISAIQKLGLAELLDKVVEYIPEYEKEIQEEEEKEEKRDYIKVAIVGKPNAGKSSLINALLNEERVLVSEIPGTTRDTVDILYEKDGQKFLFLDTAGMRKKSKVDFGLEFFSVGRTIEAIEKADVVVLVIDANQGATEQDTKIAGLIQRRYKPAVIVINKIDTVDKKTLEKVEKQVRERLYFISYAPIVFTSAKTKEGLDELLEKIVYVYNQAWKRVGTGQLNRAIKQIQNLRQPPTYQGKPLKIYYATQLEGKPPAFLLFVNKAEGFKENYVKFLENNLRKLLGLENAPIKLIFRGKEEEKDK</sequence>
<protein>
    <recommendedName>
        <fullName evidence="1">GTPase Der</fullName>
    </recommendedName>
    <alternativeName>
        <fullName evidence="1">GTP-binding protein EngA</fullName>
    </alternativeName>
</protein>
<reference key="1">
    <citation type="journal article" date="2009" name="J. Bacteriol.">
        <title>Complete and draft genome sequences of six members of the Aquificales.</title>
        <authorList>
            <person name="Reysenbach A.-L."/>
            <person name="Hamamura N."/>
            <person name="Podar M."/>
            <person name="Griffiths E."/>
            <person name="Ferreira S."/>
            <person name="Hochstein R."/>
            <person name="Heidelberg J."/>
            <person name="Johnson J."/>
            <person name="Mead D."/>
            <person name="Pohorille A."/>
            <person name="Sarmiento M."/>
            <person name="Schweighofer K."/>
            <person name="Seshadri R."/>
            <person name="Voytek M.A."/>
        </authorList>
    </citation>
    <scope>NUCLEOTIDE SEQUENCE [LARGE SCALE GENOMIC DNA]</scope>
    <source>
        <strain>YO3AOP1</strain>
    </source>
</reference>
<keyword id="KW-0342">GTP-binding</keyword>
<keyword id="KW-0547">Nucleotide-binding</keyword>
<keyword id="KW-0677">Repeat</keyword>
<keyword id="KW-0690">Ribosome biogenesis</keyword>
<proteinExistence type="inferred from homology"/>